<keyword id="KW-0963">Cytoplasm</keyword>
<keyword id="KW-0342">GTP-binding</keyword>
<keyword id="KW-0378">Hydrolase</keyword>
<keyword id="KW-0472">Membrane</keyword>
<keyword id="KW-0496">Mitochondrion</keyword>
<keyword id="KW-1000">Mitochondrion outer membrane</keyword>
<keyword id="KW-0505">Motor protein</keyword>
<keyword id="KW-0547">Nucleotide-binding</keyword>
<keyword id="KW-0962">Peroxisome biogenesis</keyword>
<keyword id="KW-1185">Reference proteome</keyword>
<accession>Q09748</accession>
<gene>
    <name type="primary">dnm1</name>
    <name type="ORF">SPBC12C2.08</name>
</gene>
<evidence type="ECO:0000250" key="1"/>
<evidence type="ECO:0000255" key="2"/>
<evidence type="ECO:0000255" key="3">
    <source>
        <dbReference type="PROSITE-ProRule" id="PRU00720"/>
    </source>
</evidence>
<evidence type="ECO:0000255" key="4">
    <source>
        <dbReference type="PROSITE-ProRule" id="PRU01055"/>
    </source>
</evidence>
<evidence type="ECO:0000256" key="5">
    <source>
        <dbReference type="SAM" id="MobiDB-lite"/>
    </source>
</evidence>
<evidence type="ECO:0000269" key="6">
    <source>
    </source>
</evidence>
<evidence type="ECO:0000269" key="7">
    <source>
    </source>
</evidence>
<evidence type="ECO:0000269" key="8">
    <source>
    </source>
</evidence>
<name>DNM1_SCHPO</name>
<proteinExistence type="inferred from homology"/>
<feature type="chain" id="PRO_0000206589" description="Dynamin-related protein dnm1">
    <location>
        <begin position="1"/>
        <end position="781"/>
    </location>
</feature>
<feature type="domain" description="Dynamin-type G" evidence="4">
    <location>
        <begin position="23"/>
        <end position="328"/>
    </location>
</feature>
<feature type="domain" description="GED" evidence="3">
    <location>
        <begin position="694"/>
        <end position="781"/>
    </location>
</feature>
<feature type="region of interest" description="G1 motif" evidence="4">
    <location>
        <begin position="33"/>
        <end position="40"/>
    </location>
</feature>
<feature type="region of interest" description="G2 motif" evidence="4">
    <location>
        <begin position="59"/>
        <end position="61"/>
    </location>
</feature>
<feature type="region of interest" description="Disordered" evidence="5">
    <location>
        <begin position="76"/>
        <end position="103"/>
    </location>
</feature>
<feature type="region of interest" description="G3 motif" evidence="4">
    <location>
        <begin position="170"/>
        <end position="173"/>
    </location>
</feature>
<feature type="region of interest" description="G4 motif" evidence="4">
    <location>
        <begin position="239"/>
        <end position="242"/>
    </location>
</feature>
<feature type="region of interest" description="G5 motif" evidence="4">
    <location>
        <begin position="269"/>
        <end position="272"/>
    </location>
</feature>
<feature type="binding site" evidence="2">
    <location>
        <begin position="33"/>
        <end position="40"/>
    </location>
    <ligand>
        <name>GTP</name>
        <dbReference type="ChEBI" id="CHEBI:37565"/>
    </ligand>
</feature>
<feature type="binding site" evidence="2">
    <location>
        <begin position="170"/>
        <end position="174"/>
    </location>
    <ligand>
        <name>GTP</name>
        <dbReference type="ChEBI" id="CHEBI:37565"/>
    </ligand>
</feature>
<feature type="binding site" evidence="2">
    <location>
        <begin position="239"/>
        <end position="242"/>
    </location>
    <ligand>
        <name>GTP</name>
        <dbReference type="ChEBI" id="CHEBI:37565"/>
    </ligand>
</feature>
<reference key="1">
    <citation type="journal article" date="2002" name="Nature">
        <title>The genome sequence of Schizosaccharomyces pombe.</title>
        <authorList>
            <person name="Wood V."/>
            <person name="Gwilliam R."/>
            <person name="Rajandream M.A."/>
            <person name="Lyne M.H."/>
            <person name="Lyne R."/>
            <person name="Stewart A."/>
            <person name="Sgouros J.G."/>
            <person name="Peat N."/>
            <person name="Hayles J."/>
            <person name="Baker S.G."/>
            <person name="Basham D."/>
            <person name="Bowman S."/>
            <person name="Brooks K."/>
            <person name="Brown D."/>
            <person name="Brown S."/>
            <person name="Chillingworth T."/>
            <person name="Churcher C.M."/>
            <person name="Collins M."/>
            <person name="Connor R."/>
            <person name="Cronin A."/>
            <person name="Davis P."/>
            <person name="Feltwell T."/>
            <person name="Fraser A."/>
            <person name="Gentles S."/>
            <person name="Goble A."/>
            <person name="Hamlin N."/>
            <person name="Harris D.E."/>
            <person name="Hidalgo J."/>
            <person name="Hodgson G."/>
            <person name="Holroyd S."/>
            <person name="Hornsby T."/>
            <person name="Howarth S."/>
            <person name="Huckle E.J."/>
            <person name="Hunt S."/>
            <person name="Jagels K."/>
            <person name="James K.D."/>
            <person name="Jones L."/>
            <person name="Jones M."/>
            <person name="Leather S."/>
            <person name="McDonald S."/>
            <person name="McLean J."/>
            <person name="Mooney P."/>
            <person name="Moule S."/>
            <person name="Mungall K.L."/>
            <person name="Murphy L.D."/>
            <person name="Niblett D."/>
            <person name="Odell C."/>
            <person name="Oliver K."/>
            <person name="O'Neil S."/>
            <person name="Pearson D."/>
            <person name="Quail M.A."/>
            <person name="Rabbinowitsch E."/>
            <person name="Rutherford K.M."/>
            <person name="Rutter S."/>
            <person name="Saunders D."/>
            <person name="Seeger K."/>
            <person name="Sharp S."/>
            <person name="Skelton J."/>
            <person name="Simmonds M.N."/>
            <person name="Squares R."/>
            <person name="Squares S."/>
            <person name="Stevens K."/>
            <person name="Taylor K."/>
            <person name="Taylor R.G."/>
            <person name="Tivey A."/>
            <person name="Walsh S.V."/>
            <person name="Warren T."/>
            <person name="Whitehead S."/>
            <person name="Woodward J.R."/>
            <person name="Volckaert G."/>
            <person name="Aert R."/>
            <person name="Robben J."/>
            <person name="Grymonprez B."/>
            <person name="Weltjens I."/>
            <person name="Vanstreels E."/>
            <person name="Rieger M."/>
            <person name="Schaefer M."/>
            <person name="Mueller-Auer S."/>
            <person name="Gabel C."/>
            <person name="Fuchs M."/>
            <person name="Duesterhoeft A."/>
            <person name="Fritzc C."/>
            <person name="Holzer E."/>
            <person name="Moestl D."/>
            <person name="Hilbert H."/>
            <person name="Borzym K."/>
            <person name="Langer I."/>
            <person name="Beck A."/>
            <person name="Lehrach H."/>
            <person name="Reinhardt R."/>
            <person name="Pohl T.M."/>
            <person name="Eger P."/>
            <person name="Zimmermann W."/>
            <person name="Wedler H."/>
            <person name="Wambutt R."/>
            <person name="Purnelle B."/>
            <person name="Goffeau A."/>
            <person name="Cadieu E."/>
            <person name="Dreano S."/>
            <person name="Gloux S."/>
            <person name="Lelaure V."/>
            <person name="Mottier S."/>
            <person name="Galibert F."/>
            <person name="Aves S.J."/>
            <person name="Xiang Z."/>
            <person name="Hunt C."/>
            <person name="Moore K."/>
            <person name="Hurst S.M."/>
            <person name="Lucas M."/>
            <person name="Rochet M."/>
            <person name="Gaillardin C."/>
            <person name="Tallada V.A."/>
            <person name="Garzon A."/>
            <person name="Thode G."/>
            <person name="Daga R.R."/>
            <person name="Cruzado L."/>
            <person name="Jimenez J."/>
            <person name="Sanchez M."/>
            <person name="del Rey F."/>
            <person name="Benito J."/>
            <person name="Dominguez A."/>
            <person name="Revuelta J.L."/>
            <person name="Moreno S."/>
            <person name="Armstrong J."/>
            <person name="Forsburg S.L."/>
            <person name="Cerutti L."/>
            <person name="Lowe T."/>
            <person name="McCombie W.R."/>
            <person name="Paulsen I."/>
            <person name="Potashkin J."/>
            <person name="Shpakovski G.V."/>
            <person name="Ussery D."/>
            <person name="Barrell B.G."/>
            <person name="Nurse P."/>
        </authorList>
    </citation>
    <scope>NUCLEOTIDE SEQUENCE [LARGE SCALE GENOMIC DNA]</scope>
    <source>
        <strain>972 / ATCC 24843</strain>
    </source>
</reference>
<reference key="2">
    <citation type="journal article" date="2006" name="Nat. Biotechnol.">
        <title>ORFeome cloning and global analysis of protein localization in the fission yeast Schizosaccharomyces pombe.</title>
        <authorList>
            <person name="Matsuyama A."/>
            <person name="Arai R."/>
            <person name="Yashiroda Y."/>
            <person name="Shirai A."/>
            <person name="Kamata A."/>
            <person name="Sekido S."/>
            <person name="Kobayashi Y."/>
            <person name="Hashimoto A."/>
            <person name="Hamamoto M."/>
            <person name="Hiraoka Y."/>
            <person name="Horinouchi S."/>
            <person name="Yoshida M."/>
        </authorList>
    </citation>
    <scope>SUBCELLULAR LOCATION [LARGE SCALE ANALYSIS]</scope>
</reference>
<reference key="3">
    <citation type="journal article" date="2008" name="Traffic">
        <title>Dynamin-dependent biogenesis, cell cycle regulation and mitochondrial association of peroxisomes in fission yeast.</title>
        <authorList>
            <person name="Jourdain I."/>
            <person name="Sontam D."/>
            <person name="Johnson C."/>
            <person name="Dillies C."/>
            <person name="Hyams J.S."/>
        </authorList>
    </citation>
    <scope>FUNCTION</scope>
</reference>
<reference key="4">
    <citation type="journal article" date="2009" name="Cell Motil. Cytoskeleton">
        <title>The dynamin related protein Dnm1 fragments mitochondria in a microtubule-dependent manner during the fission yeast cell cycle.</title>
        <authorList>
            <person name="Jourdain I."/>
            <person name="Gachet Y."/>
            <person name="Hyams J.S."/>
        </authorList>
    </citation>
    <scope>FUNCTION</scope>
    <scope>SUBCELLULAR LOCATION</scope>
</reference>
<sequence>MEQLIPLVNQLQDLVYNTIGSDFLDLPSIVVVGSQSCGKSSVLENIVGKDFLPRGTGIVTRRPLILQLINLKRKTKNNHDEESTSDNNSEETSAAGETGSLEGIEEDSDEIEDYAEFLHIPDTKFTDMNKVRAEIENETLRVAGANKGINKLPINLKIYSTRVLNLTLIDLPGLTKIPVGDQPTDIEAQTRSLIMEYISRPNSIILAVSPANFDIVNSEGLKLARSVDPKGKRTIGVLTKLDLMDQGTNAMDILSGRVYPLKLGFVATVNRSQSDIVSHKSMRDALQSERSFFEHHPAYRTIKDRCGTPYLAKTLSNLLVSHIRERLPDIKARLSTLISQTQQQLNNYGDFKLSDQSQRGIILLQAMNRFANTFIASIDGNSSNIPTKELSGGARLYSIFNNVFTTALNSIDPLQNLSTVDIRTAILNSTGSRATLFLSEMAFDILVKPQLNLLAAPCHQCVELVYEELMKICHYSGDSDISHFPKLQTALVETVSDLLRENLTPTYSFVESLIAIQSAYINTNHPDFLGVQGAMAVVLSRKEQNRLMLSQENDEPISSALDTVKPDGIELYSSDPDTSVKSITNKATNEITTLKSDDSAKMQPLDVLASKRYNNAFSTETAERKTFLSYVFGANNATRKAMSIDKSSSYPLNDSLSGGDTNHKNNHPLKMTDLSNEVETMALEDMSEREEVEVDLIKELITSYFNLTRKIIIDQVPKVIMHLLVNASKDAIQNRLVSKLYREDFFDTLLIEDENVKSEREKCERLLSVYNQANKIISTVF</sequence>
<organism>
    <name type="scientific">Schizosaccharomyces pombe (strain 972 / ATCC 24843)</name>
    <name type="common">Fission yeast</name>
    <dbReference type="NCBI Taxonomy" id="284812"/>
    <lineage>
        <taxon>Eukaryota</taxon>
        <taxon>Fungi</taxon>
        <taxon>Dikarya</taxon>
        <taxon>Ascomycota</taxon>
        <taxon>Taphrinomycotina</taxon>
        <taxon>Schizosaccharomycetes</taxon>
        <taxon>Schizosaccharomycetales</taxon>
        <taxon>Schizosaccharomycetaceae</taxon>
        <taxon>Schizosaccharomyces</taxon>
    </lineage>
</organism>
<protein>
    <recommendedName>
        <fullName>Dynamin-related protein dnm1</fullName>
        <ecNumber>3.6.5.5</ecNumber>
    </recommendedName>
</protein>
<dbReference type="EC" id="3.6.5.5"/>
<dbReference type="EMBL" id="CU329671">
    <property type="protein sequence ID" value="CAA90821.1"/>
    <property type="molecule type" value="Genomic_DNA"/>
</dbReference>
<dbReference type="PIR" id="T39373">
    <property type="entry name" value="T39373"/>
</dbReference>
<dbReference type="RefSeq" id="NP_596014.1">
    <property type="nucleotide sequence ID" value="NM_001021922.2"/>
</dbReference>
<dbReference type="SMR" id="Q09748"/>
<dbReference type="BioGRID" id="276694">
    <property type="interactions" value="27"/>
</dbReference>
<dbReference type="FunCoup" id="Q09748">
    <property type="interactions" value="735"/>
</dbReference>
<dbReference type="STRING" id="284812.Q09748"/>
<dbReference type="iPTMnet" id="Q09748"/>
<dbReference type="PaxDb" id="4896-SPBC12C2.08.1"/>
<dbReference type="EnsemblFungi" id="SPBC12C2.08.1">
    <property type="protein sequence ID" value="SPBC12C2.08.1:pep"/>
    <property type="gene ID" value="SPBC12C2.08"/>
</dbReference>
<dbReference type="GeneID" id="2540159"/>
<dbReference type="KEGG" id="spo:2540159"/>
<dbReference type="PomBase" id="SPBC12C2.08">
    <property type="gene designation" value="dnm1"/>
</dbReference>
<dbReference type="VEuPathDB" id="FungiDB:SPBC12C2.08"/>
<dbReference type="eggNOG" id="KOG0446">
    <property type="taxonomic scope" value="Eukaryota"/>
</dbReference>
<dbReference type="HOGENOM" id="CLU_008964_5_0_1"/>
<dbReference type="InParanoid" id="Q09748"/>
<dbReference type="OMA" id="KICHNCG"/>
<dbReference type="PhylomeDB" id="Q09748"/>
<dbReference type="Reactome" id="R-SPO-75153">
    <property type="pathway name" value="Apoptotic execution phase"/>
</dbReference>
<dbReference type="PRO" id="PR:Q09748"/>
<dbReference type="Proteomes" id="UP000002485">
    <property type="component" value="Chromosome II"/>
</dbReference>
<dbReference type="GO" id="GO:0032153">
    <property type="term" value="C:cell division site"/>
    <property type="evidence" value="ECO:0000314"/>
    <property type="project" value="PomBase"/>
</dbReference>
<dbReference type="GO" id="GO:0005737">
    <property type="term" value="C:cytoplasm"/>
    <property type="evidence" value="ECO:0000314"/>
    <property type="project" value="PomBase"/>
</dbReference>
<dbReference type="GO" id="GO:0016020">
    <property type="term" value="C:membrane"/>
    <property type="evidence" value="ECO:0000318"/>
    <property type="project" value="GO_Central"/>
</dbReference>
<dbReference type="GO" id="GO:0005874">
    <property type="term" value="C:microtubule"/>
    <property type="evidence" value="ECO:0000318"/>
    <property type="project" value="GO_Central"/>
</dbReference>
<dbReference type="GO" id="GO:0005741">
    <property type="term" value="C:mitochondrial outer membrane"/>
    <property type="evidence" value="ECO:0000266"/>
    <property type="project" value="PomBase"/>
</dbReference>
<dbReference type="GO" id="GO:0005739">
    <property type="term" value="C:mitochondrion"/>
    <property type="evidence" value="ECO:0000314"/>
    <property type="project" value="PomBase"/>
</dbReference>
<dbReference type="GO" id="GO:0005777">
    <property type="term" value="C:peroxisome"/>
    <property type="evidence" value="ECO:0000318"/>
    <property type="project" value="GO_Central"/>
</dbReference>
<dbReference type="GO" id="GO:0005525">
    <property type="term" value="F:GTP binding"/>
    <property type="evidence" value="ECO:0000255"/>
    <property type="project" value="PomBase"/>
</dbReference>
<dbReference type="GO" id="GO:0003924">
    <property type="term" value="F:GTPase activity"/>
    <property type="evidence" value="ECO:0000318"/>
    <property type="project" value="GO_Central"/>
</dbReference>
<dbReference type="GO" id="GO:1990606">
    <property type="term" value="F:membrane scission GTPase motor activity"/>
    <property type="evidence" value="ECO:0000304"/>
    <property type="project" value="PomBase"/>
</dbReference>
<dbReference type="GO" id="GO:0008017">
    <property type="term" value="F:microtubule binding"/>
    <property type="evidence" value="ECO:0000318"/>
    <property type="project" value="GO_Central"/>
</dbReference>
<dbReference type="GO" id="GO:0006897">
    <property type="term" value="P:endocytosis"/>
    <property type="evidence" value="ECO:0000318"/>
    <property type="project" value="GO_Central"/>
</dbReference>
<dbReference type="GO" id="GO:0034643">
    <property type="term" value="P:establishment of mitochondrion localization, microtubule-mediated"/>
    <property type="evidence" value="ECO:0000316"/>
    <property type="project" value="PomBase"/>
</dbReference>
<dbReference type="GO" id="GO:0048312">
    <property type="term" value="P:intracellular distribution of mitochondria"/>
    <property type="evidence" value="ECO:0000318"/>
    <property type="project" value="GO_Central"/>
</dbReference>
<dbReference type="GO" id="GO:0000266">
    <property type="term" value="P:mitochondrial fission"/>
    <property type="evidence" value="ECO:0000318"/>
    <property type="project" value="GO_Central"/>
</dbReference>
<dbReference type="GO" id="GO:0090149">
    <property type="term" value="P:mitochondrial membrane fission"/>
    <property type="evidence" value="ECO:0000315"/>
    <property type="project" value="PomBase"/>
</dbReference>
<dbReference type="GO" id="GO:0000001">
    <property type="term" value="P:mitochondrion inheritance"/>
    <property type="evidence" value="ECO:0000315"/>
    <property type="project" value="PomBase"/>
</dbReference>
<dbReference type="GO" id="GO:0016559">
    <property type="term" value="P:peroxisome fission"/>
    <property type="evidence" value="ECO:0000318"/>
    <property type="project" value="GO_Central"/>
</dbReference>
<dbReference type="GO" id="GO:0007031">
    <property type="term" value="P:peroxisome organization"/>
    <property type="evidence" value="ECO:0000316"/>
    <property type="project" value="PomBase"/>
</dbReference>
<dbReference type="GO" id="GO:0140572">
    <property type="term" value="P:vacuole fission"/>
    <property type="evidence" value="ECO:0000315"/>
    <property type="project" value="PomBase"/>
</dbReference>
<dbReference type="CDD" id="cd08771">
    <property type="entry name" value="DLP_1"/>
    <property type="match status" value="1"/>
</dbReference>
<dbReference type="Gene3D" id="1.20.120.1240">
    <property type="entry name" value="Dynamin, middle domain"/>
    <property type="match status" value="1"/>
</dbReference>
<dbReference type="Gene3D" id="3.40.50.300">
    <property type="entry name" value="P-loop containing nucleotide triphosphate hydrolases"/>
    <property type="match status" value="1"/>
</dbReference>
<dbReference type="InterPro" id="IPR022812">
    <property type="entry name" value="Dynamin"/>
</dbReference>
<dbReference type="InterPro" id="IPR001401">
    <property type="entry name" value="Dynamin_GTPase"/>
</dbReference>
<dbReference type="InterPro" id="IPR019762">
    <property type="entry name" value="Dynamin_GTPase_CS"/>
</dbReference>
<dbReference type="InterPro" id="IPR045063">
    <property type="entry name" value="Dynamin_N"/>
</dbReference>
<dbReference type="InterPro" id="IPR000375">
    <property type="entry name" value="Dynamin_stalk"/>
</dbReference>
<dbReference type="InterPro" id="IPR030381">
    <property type="entry name" value="G_DYNAMIN_dom"/>
</dbReference>
<dbReference type="InterPro" id="IPR003130">
    <property type="entry name" value="GED"/>
</dbReference>
<dbReference type="InterPro" id="IPR020850">
    <property type="entry name" value="GED_dom"/>
</dbReference>
<dbReference type="InterPro" id="IPR027417">
    <property type="entry name" value="P-loop_NTPase"/>
</dbReference>
<dbReference type="PANTHER" id="PTHR11566">
    <property type="entry name" value="DYNAMIN"/>
    <property type="match status" value="1"/>
</dbReference>
<dbReference type="PANTHER" id="PTHR11566:SF235">
    <property type="entry name" value="DYNAMIN-RELATED PROTEIN DNM1"/>
    <property type="match status" value="1"/>
</dbReference>
<dbReference type="Pfam" id="PF01031">
    <property type="entry name" value="Dynamin_M"/>
    <property type="match status" value="1"/>
</dbReference>
<dbReference type="Pfam" id="PF00350">
    <property type="entry name" value="Dynamin_N"/>
    <property type="match status" value="1"/>
</dbReference>
<dbReference type="Pfam" id="PF02212">
    <property type="entry name" value="GED"/>
    <property type="match status" value="1"/>
</dbReference>
<dbReference type="PRINTS" id="PR00195">
    <property type="entry name" value="DYNAMIN"/>
</dbReference>
<dbReference type="SMART" id="SM00053">
    <property type="entry name" value="DYNc"/>
    <property type="match status" value="1"/>
</dbReference>
<dbReference type="SMART" id="SM00302">
    <property type="entry name" value="GED"/>
    <property type="match status" value="1"/>
</dbReference>
<dbReference type="SUPFAM" id="SSF52540">
    <property type="entry name" value="P-loop containing nucleoside triphosphate hydrolases"/>
    <property type="match status" value="1"/>
</dbReference>
<dbReference type="PROSITE" id="PS00410">
    <property type="entry name" value="G_DYNAMIN_1"/>
    <property type="match status" value="1"/>
</dbReference>
<dbReference type="PROSITE" id="PS51718">
    <property type="entry name" value="G_DYNAMIN_2"/>
    <property type="match status" value="1"/>
</dbReference>
<dbReference type="PROSITE" id="PS51388">
    <property type="entry name" value="GED"/>
    <property type="match status" value="1"/>
</dbReference>
<comment type="function">
    <text evidence="7 8">Microtubule-associated force-producing protein that mediates mitochondrial fission during interphasic growth and at cell division. Fission of mitochondria occurs in many cell types and constitutes an important step in mitochondria morphology, which is balanced between fusion and fission. With vps1, acts redundantly in peroxisome biogenesis, which is under cell cycle control.</text>
</comment>
<comment type="catalytic activity">
    <reaction>
        <text>GTP + H2O = GDP + phosphate + H(+)</text>
        <dbReference type="Rhea" id="RHEA:19669"/>
        <dbReference type="ChEBI" id="CHEBI:15377"/>
        <dbReference type="ChEBI" id="CHEBI:15378"/>
        <dbReference type="ChEBI" id="CHEBI:37565"/>
        <dbReference type="ChEBI" id="CHEBI:43474"/>
        <dbReference type="ChEBI" id="CHEBI:58189"/>
        <dbReference type="EC" id="3.6.5.5"/>
    </reaction>
</comment>
<comment type="subcellular location">
    <subcellularLocation>
        <location evidence="6 8">Cytoplasm</location>
    </subcellularLocation>
    <subcellularLocation>
        <location evidence="1">Mitochondrion outer membrane</location>
        <topology evidence="1">Peripheral membrane protein</topology>
        <orientation evidence="1">Cytoplasmic side</orientation>
    </subcellularLocation>
    <text>Localizes at sites of mitochondrial constriction.</text>
</comment>
<comment type="similarity">
    <text evidence="4">Belongs to the TRAFAC class dynamin-like GTPase superfamily. Dynamin/Fzo/YdjA family.</text>
</comment>